<organism>
    <name type="scientific">Idiomarina loihiensis (strain ATCC BAA-735 / DSM 15497 / L2-TR)</name>
    <dbReference type="NCBI Taxonomy" id="283942"/>
    <lineage>
        <taxon>Bacteria</taxon>
        <taxon>Pseudomonadati</taxon>
        <taxon>Pseudomonadota</taxon>
        <taxon>Gammaproteobacteria</taxon>
        <taxon>Alteromonadales</taxon>
        <taxon>Idiomarinaceae</taxon>
        <taxon>Idiomarina</taxon>
    </lineage>
</organism>
<reference key="1">
    <citation type="journal article" date="2004" name="Proc. Natl. Acad. Sci. U.S.A.">
        <title>Genome sequence of the deep-sea gamma-proteobacterium Idiomarina loihiensis reveals amino acid fermentation as a source of carbon and energy.</title>
        <authorList>
            <person name="Hou S."/>
            <person name="Saw J.H."/>
            <person name="Lee K.S."/>
            <person name="Freitas T.A."/>
            <person name="Belisle C."/>
            <person name="Kawarabayasi Y."/>
            <person name="Donachie S.P."/>
            <person name="Pikina A."/>
            <person name="Galperin M.Y."/>
            <person name="Koonin E.V."/>
            <person name="Makarova K.S."/>
            <person name="Omelchenko M.V."/>
            <person name="Sorokin A."/>
            <person name="Wolf Y.I."/>
            <person name="Li Q.X."/>
            <person name="Keum Y.S."/>
            <person name="Campbell S."/>
            <person name="Denery J."/>
            <person name="Aizawa S."/>
            <person name="Shibata S."/>
            <person name="Malahoff A."/>
            <person name="Alam M."/>
        </authorList>
    </citation>
    <scope>NUCLEOTIDE SEQUENCE [LARGE SCALE GENOMIC DNA]</scope>
    <source>
        <strain>ATCC BAA-735 / DSM 15497 / L2-TR</strain>
    </source>
</reference>
<accession>Q5QVQ6</accession>
<dbReference type="EC" id="6.1.1.-" evidence="1"/>
<dbReference type="EMBL" id="AE017340">
    <property type="protein sequence ID" value="AAV83083.1"/>
    <property type="molecule type" value="Genomic_DNA"/>
</dbReference>
<dbReference type="SMR" id="Q5QVQ6"/>
<dbReference type="STRING" id="283942.IL2251"/>
<dbReference type="GeneID" id="41337440"/>
<dbReference type="KEGG" id="ilo:IL2251"/>
<dbReference type="eggNOG" id="COG0008">
    <property type="taxonomic scope" value="Bacteria"/>
</dbReference>
<dbReference type="HOGENOM" id="CLU_015768_0_1_6"/>
<dbReference type="OrthoDB" id="9807503at2"/>
<dbReference type="Proteomes" id="UP000001171">
    <property type="component" value="Chromosome"/>
</dbReference>
<dbReference type="GO" id="GO:0005829">
    <property type="term" value="C:cytosol"/>
    <property type="evidence" value="ECO:0007669"/>
    <property type="project" value="TreeGrafter"/>
</dbReference>
<dbReference type="GO" id="GO:0005524">
    <property type="term" value="F:ATP binding"/>
    <property type="evidence" value="ECO:0007669"/>
    <property type="project" value="UniProtKB-KW"/>
</dbReference>
<dbReference type="GO" id="GO:0004818">
    <property type="term" value="F:glutamate-tRNA ligase activity"/>
    <property type="evidence" value="ECO:0007669"/>
    <property type="project" value="TreeGrafter"/>
</dbReference>
<dbReference type="GO" id="GO:0008270">
    <property type="term" value="F:zinc ion binding"/>
    <property type="evidence" value="ECO:0007669"/>
    <property type="project" value="UniProtKB-UniRule"/>
</dbReference>
<dbReference type="GO" id="GO:0006424">
    <property type="term" value="P:glutamyl-tRNA aminoacylation"/>
    <property type="evidence" value="ECO:0007669"/>
    <property type="project" value="InterPro"/>
</dbReference>
<dbReference type="GO" id="GO:0006400">
    <property type="term" value="P:tRNA modification"/>
    <property type="evidence" value="ECO:0007669"/>
    <property type="project" value="InterPro"/>
</dbReference>
<dbReference type="FunFam" id="3.40.50.620:FF:000093">
    <property type="entry name" value="Glutamyl-Q tRNA(Asp) synthetase"/>
    <property type="match status" value="1"/>
</dbReference>
<dbReference type="Gene3D" id="3.40.50.620">
    <property type="entry name" value="HUPs"/>
    <property type="match status" value="1"/>
</dbReference>
<dbReference type="HAMAP" id="MF_01428">
    <property type="entry name" value="Glu_Q_tRNA_synth"/>
    <property type="match status" value="1"/>
</dbReference>
<dbReference type="InterPro" id="IPR022380">
    <property type="entry name" value="Glu-Q_tRNA(Asp)_Synthase"/>
</dbReference>
<dbReference type="InterPro" id="IPR000924">
    <property type="entry name" value="Glu/Gln-tRNA-synth"/>
</dbReference>
<dbReference type="InterPro" id="IPR020058">
    <property type="entry name" value="Glu/Gln-tRNA-synth_Ib_cat-dom"/>
</dbReference>
<dbReference type="InterPro" id="IPR049940">
    <property type="entry name" value="GluQ/Sye"/>
</dbReference>
<dbReference type="InterPro" id="IPR014729">
    <property type="entry name" value="Rossmann-like_a/b/a_fold"/>
</dbReference>
<dbReference type="NCBIfam" id="NF004314">
    <property type="entry name" value="PRK05710.1-3"/>
    <property type="match status" value="1"/>
</dbReference>
<dbReference type="NCBIfam" id="TIGR03838">
    <property type="entry name" value="queuosine_YadB"/>
    <property type="match status" value="1"/>
</dbReference>
<dbReference type="PANTHER" id="PTHR43311">
    <property type="entry name" value="GLUTAMATE--TRNA LIGASE"/>
    <property type="match status" value="1"/>
</dbReference>
<dbReference type="PANTHER" id="PTHR43311:SF1">
    <property type="entry name" value="GLUTAMYL-Q TRNA(ASP) SYNTHETASE"/>
    <property type="match status" value="1"/>
</dbReference>
<dbReference type="Pfam" id="PF00749">
    <property type="entry name" value="tRNA-synt_1c"/>
    <property type="match status" value="1"/>
</dbReference>
<dbReference type="PRINTS" id="PR00987">
    <property type="entry name" value="TRNASYNTHGLU"/>
</dbReference>
<dbReference type="SUPFAM" id="SSF52374">
    <property type="entry name" value="Nucleotidylyl transferase"/>
    <property type="match status" value="1"/>
</dbReference>
<proteinExistence type="inferred from homology"/>
<evidence type="ECO:0000255" key="1">
    <source>
        <dbReference type="HAMAP-Rule" id="MF_01428"/>
    </source>
</evidence>
<name>GLUQ_IDILO</name>
<sequence>MYRGRFAPTPSGPLHLGSLVAAVGSYLDAKAHRGEWLVRIEDVDKPRAVPGAADTILTQLEAHGLEWDGSVLYQSQRDSVYQHQLNQLENAQRLYQCDCSRRAIRARSDHYDGYCRNRQPRSTPYALRFINNNPVDTFNDRAHGLLEDHSASVSEDFVLKRRDGLYAYQLAVVVDDIEQGITDIVRGSDLITPSFWQLTLWQYFTGKQPRMMHLPLIMNDDGLKLSKQNHAPSIESSQARNNLFTALDYLGIKPESELRHSPVSEILQQALQSWCKKWHIAGR</sequence>
<protein>
    <recommendedName>
        <fullName evidence="1">Glutamyl-Q tRNA(Asp) synthetase</fullName>
        <shortName evidence="1">Glu-Q-RSs</shortName>
        <ecNumber evidence="1">6.1.1.-</ecNumber>
    </recommendedName>
</protein>
<keyword id="KW-0030">Aminoacyl-tRNA synthetase</keyword>
<keyword id="KW-0067">ATP-binding</keyword>
<keyword id="KW-0436">Ligase</keyword>
<keyword id="KW-0479">Metal-binding</keyword>
<keyword id="KW-0547">Nucleotide-binding</keyword>
<keyword id="KW-1185">Reference proteome</keyword>
<keyword id="KW-0862">Zinc</keyword>
<comment type="function">
    <text evidence="1">Catalyzes the tRNA-independent activation of glutamate in presence of ATP and the subsequent transfer of glutamate onto a tRNA(Asp). Glutamate is transferred on the 2-amino-5-(4,5-dihydroxy-2-cyclopenten-1-yl) moiety of the queuosine in the wobble position of the QUC anticodon.</text>
</comment>
<comment type="cofactor">
    <cofactor evidence="1">
        <name>Zn(2+)</name>
        <dbReference type="ChEBI" id="CHEBI:29105"/>
    </cofactor>
    <text evidence="1">Binds 1 zinc ion per subunit.</text>
</comment>
<comment type="similarity">
    <text evidence="1">Belongs to the class-I aminoacyl-tRNA synthetase family. GluQ subfamily.</text>
</comment>
<gene>
    <name evidence="1" type="primary">gluQ</name>
    <name type="ordered locus">IL2251</name>
</gene>
<feature type="chain" id="PRO_0000208304" description="Glutamyl-Q tRNA(Asp) synthetase">
    <location>
        <begin position="1"/>
        <end position="283"/>
    </location>
</feature>
<feature type="short sequence motif" description="'HIGH' region">
    <location>
        <begin position="8"/>
        <end position="18"/>
    </location>
</feature>
<feature type="short sequence motif" description="'KMSKS' region">
    <location>
        <begin position="224"/>
        <end position="228"/>
    </location>
</feature>
<feature type="binding site" evidence="1">
    <location>
        <begin position="5"/>
        <end position="9"/>
    </location>
    <ligand>
        <name>L-glutamate</name>
        <dbReference type="ChEBI" id="CHEBI:29985"/>
    </ligand>
</feature>
<feature type="binding site" evidence="1">
    <location>
        <position position="41"/>
    </location>
    <ligand>
        <name>L-glutamate</name>
        <dbReference type="ChEBI" id="CHEBI:29985"/>
    </ligand>
</feature>
<feature type="binding site" evidence="1">
    <location>
        <position position="97"/>
    </location>
    <ligand>
        <name>Zn(2+)</name>
        <dbReference type="ChEBI" id="CHEBI:29105"/>
    </ligand>
</feature>
<feature type="binding site" evidence="1">
    <location>
        <position position="99"/>
    </location>
    <ligand>
        <name>Zn(2+)</name>
        <dbReference type="ChEBI" id="CHEBI:29105"/>
    </ligand>
</feature>
<feature type="binding site" evidence="1">
    <location>
        <position position="111"/>
    </location>
    <ligand>
        <name>Zn(2+)</name>
        <dbReference type="ChEBI" id="CHEBI:29105"/>
    </ligand>
</feature>
<feature type="binding site" evidence="1">
    <location>
        <position position="115"/>
    </location>
    <ligand>
        <name>Zn(2+)</name>
        <dbReference type="ChEBI" id="CHEBI:29105"/>
    </ligand>
</feature>
<feature type="binding site" evidence="1">
    <location>
        <position position="168"/>
    </location>
    <ligand>
        <name>L-glutamate</name>
        <dbReference type="ChEBI" id="CHEBI:29985"/>
    </ligand>
</feature>
<feature type="binding site" evidence="1">
    <location>
        <position position="186"/>
    </location>
    <ligand>
        <name>L-glutamate</name>
        <dbReference type="ChEBI" id="CHEBI:29985"/>
    </ligand>
</feature>
<feature type="binding site" evidence="1">
    <location>
        <position position="227"/>
    </location>
    <ligand>
        <name>ATP</name>
        <dbReference type="ChEBI" id="CHEBI:30616"/>
    </ligand>
</feature>